<accession>Q0SHJ0</accession>
<evidence type="ECO:0000255" key="1">
    <source>
        <dbReference type="HAMAP-Rule" id="MF_00156"/>
    </source>
</evidence>
<evidence type="ECO:0000256" key="2">
    <source>
        <dbReference type="SAM" id="MobiDB-lite"/>
    </source>
</evidence>
<protein>
    <recommendedName>
        <fullName evidence="1">3-methyl-2-oxobutanoate hydroxymethyltransferase</fullName>
        <ecNumber evidence="1">2.1.2.11</ecNumber>
    </recommendedName>
    <alternativeName>
        <fullName evidence="1">Ketopantoate hydroxymethyltransferase</fullName>
        <shortName evidence="1">KPHMT</shortName>
    </alternativeName>
</protein>
<keyword id="KW-0963">Cytoplasm</keyword>
<keyword id="KW-0460">Magnesium</keyword>
<keyword id="KW-0479">Metal-binding</keyword>
<keyword id="KW-0566">Pantothenate biosynthesis</keyword>
<keyword id="KW-0808">Transferase</keyword>
<comment type="function">
    <text evidence="1">Catalyzes the reversible reaction in which hydroxymethyl group from 5,10-methylenetetrahydrofolate is transferred onto alpha-ketoisovalerate to form ketopantoate.</text>
</comment>
<comment type="catalytic activity">
    <reaction evidence="1">
        <text>3-methyl-2-oxobutanoate + (6R)-5,10-methylene-5,6,7,8-tetrahydrofolate + H2O = 2-dehydropantoate + (6S)-5,6,7,8-tetrahydrofolate</text>
        <dbReference type="Rhea" id="RHEA:11824"/>
        <dbReference type="ChEBI" id="CHEBI:11561"/>
        <dbReference type="ChEBI" id="CHEBI:11851"/>
        <dbReference type="ChEBI" id="CHEBI:15377"/>
        <dbReference type="ChEBI" id="CHEBI:15636"/>
        <dbReference type="ChEBI" id="CHEBI:57453"/>
        <dbReference type="EC" id="2.1.2.11"/>
    </reaction>
</comment>
<comment type="cofactor">
    <cofactor evidence="1">
        <name>Mg(2+)</name>
        <dbReference type="ChEBI" id="CHEBI:18420"/>
    </cofactor>
    <text evidence="1">Binds 1 Mg(2+) ion per subunit.</text>
</comment>
<comment type="pathway">
    <text evidence="1">Cofactor biosynthesis; (R)-pantothenate biosynthesis; (R)-pantoate from 3-methyl-2-oxobutanoate: step 1/2.</text>
</comment>
<comment type="subunit">
    <text evidence="1">Homodecamer; pentamer of dimers.</text>
</comment>
<comment type="subcellular location">
    <subcellularLocation>
        <location evidence="1">Cytoplasm</location>
    </subcellularLocation>
</comment>
<comment type="similarity">
    <text evidence="1">Belongs to the PanB family.</text>
</comment>
<dbReference type="EC" id="2.1.2.11" evidence="1"/>
<dbReference type="EMBL" id="CP000431">
    <property type="protein sequence ID" value="ABG92996.1"/>
    <property type="molecule type" value="Genomic_DNA"/>
</dbReference>
<dbReference type="RefSeq" id="WP_009473813.1">
    <property type="nucleotide sequence ID" value="NC_008268.1"/>
</dbReference>
<dbReference type="SMR" id="Q0SHJ0"/>
<dbReference type="KEGG" id="rha:RHA1_ro01169"/>
<dbReference type="eggNOG" id="COG0413">
    <property type="taxonomic scope" value="Bacteria"/>
</dbReference>
<dbReference type="HOGENOM" id="CLU_036645_1_0_11"/>
<dbReference type="OrthoDB" id="9781789at2"/>
<dbReference type="UniPathway" id="UPA00028">
    <property type="reaction ID" value="UER00003"/>
</dbReference>
<dbReference type="Proteomes" id="UP000008710">
    <property type="component" value="Chromosome"/>
</dbReference>
<dbReference type="GO" id="GO:0005737">
    <property type="term" value="C:cytoplasm"/>
    <property type="evidence" value="ECO:0007669"/>
    <property type="project" value="UniProtKB-SubCell"/>
</dbReference>
<dbReference type="GO" id="GO:0003864">
    <property type="term" value="F:3-methyl-2-oxobutanoate hydroxymethyltransferase activity"/>
    <property type="evidence" value="ECO:0007669"/>
    <property type="project" value="UniProtKB-UniRule"/>
</dbReference>
<dbReference type="GO" id="GO:0000287">
    <property type="term" value="F:magnesium ion binding"/>
    <property type="evidence" value="ECO:0007669"/>
    <property type="project" value="TreeGrafter"/>
</dbReference>
<dbReference type="GO" id="GO:0015940">
    <property type="term" value="P:pantothenate biosynthetic process"/>
    <property type="evidence" value="ECO:0007669"/>
    <property type="project" value="UniProtKB-UniRule"/>
</dbReference>
<dbReference type="CDD" id="cd06557">
    <property type="entry name" value="KPHMT-like"/>
    <property type="match status" value="1"/>
</dbReference>
<dbReference type="FunFam" id="3.20.20.60:FF:000003">
    <property type="entry name" value="3-methyl-2-oxobutanoate hydroxymethyltransferase"/>
    <property type="match status" value="1"/>
</dbReference>
<dbReference type="Gene3D" id="3.20.20.60">
    <property type="entry name" value="Phosphoenolpyruvate-binding domains"/>
    <property type="match status" value="1"/>
</dbReference>
<dbReference type="HAMAP" id="MF_00156">
    <property type="entry name" value="PanB"/>
    <property type="match status" value="1"/>
</dbReference>
<dbReference type="InterPro" id="IPR003700">
    <property type="entry name" value="Pantoate_hydroxy_MeTrfase"/>
</dbReference>
<dbReference type="InterPro" id="IPR015813">
    <property type="entry name" value="Pyrv/PenolPyrv_kinase-like_dom"/>
</dbReference>
<dbReference type="InterPro" id="IPR040442">
    <property type="entry name" value="Pyrv_kinase-like_dom_sf"/>
</dbReference>
<dbReference type="NCBIfam" id="TIGR00222">
    <property type="entry name" value="panB"/>
    <property type="match status" value="1"/>
</dbReference>
<dbReference type="NCBIfam" id="NF001452">
    <property type="entry name" value="PRK00311.1"/>
    <property type="match status" value="1"/>
</dbReference>
<dbReference type="PANTHER" id="PTHR20881">
    <property type="entry name" value="3-METHYL-2-OXOBUTANOATE HYDROXYMETHYLTRANSFERASE"/>
    <property type="match status" value="1"/>
</dbReference>
<dbReference type="PANTHER" id="PTHR20881:SF0">
    <property type="entry name" value="3-METHYL-2-OXOBUTANOATE HYDROXYMETHYLTRANSFERASE"/>
    <property type="match status" value="1"/>
</dbReference>
<dbReference type="Pfam" id="PF02548">
    <property type="entry name" value="Pantoate_transf"/>
    <property type="match status" value="1"/>
</dbReference>
<dbReference type="PIRSF" id="PIRSF000388">
    <property type="entry name" value="Pantoate_hydroxy_MeTrfase"/>
    <property type="match status" value="1"/>
</dbReference>
<dbReference type="SUPFAM" id="SSF51621">
    <property type="entry name" value="Phosphoenolpyruvate/pyruvate domain"/>
    <property type="match status" value="1"/>
</dbReference>
<reference key="1">
    <citation type="journal article" date="2006" name="Proc. Natl. Acad. Sci. U.S.A.">
        <title>The complete genome of Rhodococcus sp. RHA1 provides insights into a catabolic powerhouse.</title>
        <authorList>
            <person name="McLeod M.P."/>
            <person name="Warren R.L."/>
            <person name="Hsiao W.W.L."/>
            <person name="Araki N."/>
            <person name="Myhre M."/>
            <person name="Fernandes C."/>
            <person name="Miyazawa D."/>
            <person name="Wong W."/>
            <person name="Lillquist A.L."/>
            <person name="Wang D."/>
            <person name="Dosanjh M."/>
            <person name="Hara H."/>
            <person name="Petrescu A."/>
            <person name="Morin R.D."/>
            <person name="Yang G."/>
            <person name="Stott J.M."/>
            <person name="Schein J.E."/>
            <person name="Shin H."/>
            <person name="Smailus D."/>
            <person name="Siddiqui A.S."/>
            <person name="Marra M.A."/>
            <person name="Jones S.J.M."/>
            <person name="Holt R."/>
            <person name="Brinkman F.S.L."/>
            <person name="Miyauchi K."/>
            <person name="Fukuda M."/>
            <person name="Davies J.E."/>
            <person name="Mohn W.W."/>
            <person name="Eltis L.D."/>
        </authorList>
    </citation>
    <scope>NUCLEOTIDE SEQUENCE [LARGE SCALE GENOMIC DNA]</scope>
    <source>
        <strain>RHA1</strain>
    </source>
</reference>
<organism>
    <name type="scientific">Rhodococcus jostii (strain RHA1)</name>
    <dbReference type="NCBI Taxonomy" id="101510"/>
    <lineage>
        <taxon>Bacteria</taxon>
        <taxon>Bacillati</taxon>
        <taxon>Actinomycetota</taxon>
        <taxon>Actinomycetes</taxon>
        <taxon>Mycobacteriales</taxon>
        <taxon>Nocardiaceae</taxon>
        <taxon>Rhodococcus</taxon>
    </lineage>
</organism>
<feature type="chain" id="PRO_0000297353" description="3-methyl-2-oxobutanoate hydroxymethyltransferase">
    <location>
        <begin position="1"/>
        <end position="289"/>
    </location>
</feature>
<feature type="region of interest" description="Disordered" evidence="2">
    <location>
        <begin position="1"/>
        <end position="33"/>
    </location>
</feature>
<feature type="compositionally biased region" description="Low complexity" evidence="2">
    <location>
        <begin position="1"/>
        <end position="10"/>
    </location>
</feature>
<feature type="active site" description="Proton acceptor" evidence="1">
    <location>
        <position position="207"/>
    </location>
</feature>
<feature type="binding site" evidence="1">
    <location>
        <begin position="70"/>
        <end position="71"/>
    </location>
    <ligand>
        <name>3-methyl-2-oxobutanoate</name>
        <dbReference type="ChEBI" id="CHEBI:11851"/>
    </ligand>
</feature>
<feature type="binding site" evidence="1">
    <location>
        <position position="70"/>
    </location>
    <ligand>
        <name>Mg(2+)</name>
        <dbReference type="ChEBI" id="CHEBI:18420"/>
    </ligand>
</feature>
<feature type="binding site" evidence="1">
    <location>
        <position position="109"/>
    </location>
    <ligand>
        <name>3-methyl-2-oxobutanoate</name>
        <dbReference type="ChEBI" id="CHEBI:11851"/>
    </ligand>
</feature>
<feature type="binding site" evidence="1">
    <location>
        <position position="109"/>
    </location>
    <ligand>
        <name>Mg(2+)</name>
        <dbReference type="ChEBI" id="CHEBI:18420"/>
    </ligand>
</feature>
<feature type="binding site" evidence="1">
    <location>
        <position position="139"/>
    </location>
    <ligand>
        <name>3-methyl-2-oxobutanoate</name>
        <dbReference type="ChEBI" id="CHEBI:11851"/>
    </ligand>
</feature>
<feature type="binding site" evidence="1">
    <location>
        <position position="141"/>
    </location>
    <ligand>
        <name>Mg(2+)</name>
        <dbReference type="ChEBI" id="CHEBI:18420"/>
    </ligand>
</feature>
<sequence length="289" mass="30437">MSDSKSSASTSEDRLYGSAPSHDVPKRKTRTHHLQAMKAEGERWAMLTAYDYSSARIFEEAGIPVLLVGDSAANVVYGYETTVPVTIDELLPLVRGVVRGAPHALVVADLPFGSYESSPEQALASATRFMKEGLAHAVKLEGGERVAPQIAAITAAGIPVMAHVGFTPQSVNSLGGFRVQGRGDAAEQLVADAIAVQEAGAFSVVMEMVPAEIAGQVTRKLTIPTVGIGAGVECDAQVLVWQDMAGYTSGKTAKFVKRFGNVGDELRSAAAAYATEVRAGTFPAEEHSF</sequence>
<proteinExistence type="inferred from homology"/>
<name>PANB_RHOJR</name>
<gene>
    <name evidence="1" type="primary">panB</name>
    <name type="ordered locus">RHA1_ro01169</name>
</gene>